<keyword id="KW-0472">Membrane</keyword>
<keyword id="KW-0496">Mitochondrion</keyword>
<keyword id="KW-0809">Transit peptide</keyword>
<keyword id="KW-0812">Transmembrane</keyword>
<keyword id="KW-1133">Transmembrane helix</keyword>
<protein>
    <recommendedName>
        <fullName>Genetic interactor of prohibitin 7, mitochondrial</fullName>
    </recommendedName>
</protein>
<feature type="transit peptide" description="Mitochondrion" evidence="2">
    <location>
        <begin position="1"/>
        <end position="24"/>
    </location>
</feature>
<feature type="chain" id="PRO_0000399743" description="Genetic interactor of prohibitin 7, mitochondrial">
    <location>
        <begin position="25"/>
        <end position="287"/>
    </location>
</feature>
<feature type="transmembrane region" description="Helical" evidence="2">
    <location>
        <begin position="250"/>
        <end position="266"/>
    </location>
</feature>
<reference key="1">
    <citation type="journal article" date="2007" name="Proc. Natl. Acad. Sci. U.S.A.">
        <title>Genome sequencing and comparative analysis of Saccharomyces cerevisiae strain YJM789.</title>
        <authorList>
            <person name="Wei W."/>
            <person name="McCusker J.H."/>
            <person name="Hyman R.W."/>
            <person name="Jones T."/>
            <person name="Ning Y."/>
            <person name="Cao Z."/>
            <person name="Gu Z."/>
            <person name="Bruno D."/>
            <person name="Miranda M."/>
            <person name="Nguyen M."/>
            <person name="Wilhelmy J."/>
            <person name="Komp C."/>
            <person name="Tamse R."/>
            <person name="Wang X."/>
            <person name="Jia P."/>
            <person name="Luedi P."/>
            <person name="Oefner P.J."/>
            <person name="David L."/>
            <person name="Dietrich F.S."/>
            <person name="Li Y."/>
            <person name="Davis R.W."/>
            <person name="Steinmetz L.M."/>
        </authorList>
    </citation>
    <scope>NUCLEOTIDE SEQUENCE [LARGE SCALE GENOMIC DNA]</scope>
    <source>
        <strain>YJM789</strain>
    </source>
</reference>
<name>GEP7_YEAS7</name>
<organism>
    <name type="scientific">Saccharomyces cerevisiae (strain YJM789)</name>
    <name type="common">Baker's yeast</name>
    <dbReference type="NCBI Taxonomy" id="307796"/>
    <lineage>
        <taxon>Eukaryota</taxon>
        <taxon>Fungi</taxon>
        <taxon>Dikarya</taxon>
        <taxon>Ascomycota</taxon>
        <taxon>Saccharomycotina</taxon>
        <taxon>Saccharomycetes</taxon>
        <taxon>Saccharomycetales</taxon>
        <taxon>Saccharomycetaceae</taxon>
        <taxon>Saccharomyces</taxon>
    </lineage>
</organism>
<comment type="function">
    <text evidence="1">Involved in respiratory growth and required for cell survival in the absence of prohibitins or GEM1.</text>
</comment>
<comment type="subcellular location">
    <subcellularLocation>
        <location evidence="1">Mitochondrion membrane</location>
        <topology evidence="1">Single-pass membrane protein</topology>
    </subcellularLocation>
</comment>
<comment type="similarity">
    <text evidence="3">Belongs to the GEP7 family.</text>
</comment>
<accession>A6ZUB9</accession>
<gene>
    <name type="primary">GEP7</name>
    <name type="ORF">SCY_2002</name>
</gene>
<dbReference type="EMBL" id="AAFW02000099">
    <property type="protein sequence ID" value="EDN62057.1"/>
    <property type="molecule type" value="Genomic_DNA"/>
</dbReference>
<dbReference type="HOGENOM" id="CLU_064141_0_0_1"/>
<dbReference type="Proteomes" id="UP000007060">
    <property type="component" value="Unassembled WGS sequence"/>
</dbReference>
<dbReference type="GO" id="GO:0031966">
    <property type="term" value="C:mitochondrial membrane"/>
    <property type="evidence" value="ECO:0007669"/>
    <property type="project" value="UniProtKB-SubCell"/>
</dbReference>
<evidence type="ECO:0000250" key="1"/>
<evidence type="ECO:0000255" key="2"/>
<evidence type="ECO:0000305" key="3"/>
<proteinExistence type="inferred from homology"/>
<sequence>MVLSNVKIFRLKSHRAFRIGPMIKAVAGNLLVKRFYQPKLERIPPASLLLKQKIRLAQNGSTTSTENPISFSQTMSEIFSVLQPSAPDLDEDKTSGLKRDHLLTERLNNGELGVIMNKFFNPSSTHNNQLIDTNILLQNFPKLSGNDLDLLDFAINEKMRGNWNDLKQDFIQLWYYKSFGFLGPRTQFVLTNSSPSLRSQFLKLPFTEYNWFLLQNNKNANILPADVQNVVKVFHLDDKRFTWKSIDPFSKAIISFVVFVSIYVWLDESAKQKTKELPAQKSTVISE</sequence>